<proteinExistence type="inferred from homology"/>
<accession>Q15PI4</accession>
<dbReference type="EMBL" id="CP000388">
    <property type="protein sequence ID" value="ABG42204.1"/>
    <property type="molecule type" value="Genomic_DNA"/>
</dbReference>
<dbReference type="RefSeq" id="WP_006991013.1">
    <property type="nucleotide sequence ID" value="NC_008228.1"/>
</dbReference>
<dbReference type="SMR" id="Q15PI4"/>
<dbReference type="STRING" id="342610.Patl_3702"/>
<dbReference type="KEGG" id="pat:Patl_3702"/>
<dbReference type="eggNOG" id="COG0103">
    <property type="taxonomic scope" value="Bacteria"/>
</dbReference>
<dbReference type="HOGENOM" id="CLU_046483_2_1_6"/>
<dbReference type="OrthoDB" id="9803965at2"/>
<dbReference type="Proteomes" id="UP000001981">
    <property type="component" value="Chromosome"/>
</dbReference>
<dbReference type="GO" id="GO:0022627">
    <property type="term" value="C:cytosolic small ribosomal subunit"/>
    <property type="evidence" value="ECO:0007669"/>
    <property type="project" value="TreeGrafter"/>
</dbReference>
<dbReference type="GO" id="GO:0003723">
    <property type="term" value="F:RNA binding"/>
    <property type="evidence" value="ECO:0007669"/>
    <property type="project" value="TreeGrafter"/>
</dbReference>
<dbReference type="GO" id="GO:0003735">
    <property type="term" value="F:structural constituent of ribosome"/>
    <property type="evidence" value="ECO:0007669"/>
    <property type="project" value="InterPro"/>
</dbReference>
<dbReference type="GO" id="GO:0006412">
    <property type="term" value="P:translation"/>
    <property type="evidence" value="ECO:0007669"/>
    <property type="project" value="UniProtKB-UniRule"/>
</dbReference>
<dbReference type="FunFam" id="3.30.230.10:FF:000001">
    <property type="entry name" value="30S ribosomal protein S9"/>
    <property type="match status" value="1"/>
</dbReference>
<dbReference type="Gene3D" id="3.30.230.10">
    <property type="match status" value="1"/>
</dbReference>
<dbReference type="HAMAP" id="MF_00532_B">
    <property type="entry name" value="Ribosomal_uS9_B"/>
    <property type="match status" value="1"/>
</dbReference>
<dbReference type="InterPro" id="IPR020568">
    <property type="entry name" value="Ribosomal_Su5_D2-typ_SF"/>
</dbReference>
<dbReference type="InterPro" id="IPR000754">
    <property type="entry name" value="Ribosomal_uS9"/>
</dbReference>
<dbReference type="InterPro" id="IPR023035">
    <property type="entry name" value="Ribosomal_uS9_bac/plastid"/>
</dbReference>
<dbReference type="InterPro" id="IPR020574">
    <property type="entry name" value="Ribosomal_uS9_CS"/>
</dbReference>
<dbReference type="InterPro" id="IPR014721">
    <property type="entry name" value="Ribsml_uS5_D2-typ_fold_subgr"/>
</dbReference>
<dbReference type="NCBIfam" id="NF001099">
    <property type="entry name" value="PRK00132.1"/>
    <property type="match status" value="1"/>
</dbReference>
<dbReference type="PANTHER" id="PTHR21569">
    <property type="entry name" value="RIBOSOMAL PROTEIN S9"/>
    <property type="match status" value="1"/>
</dbReference>
<dbReference type="PANTHER" id="PTHR21569:SF1">
    <property type="entry name" value="SMALL RIBOSOMAL SUBUNIT PROTEIN US9M"/>
    <property type="match status" value="1"/>
</dbReference>
<dbReference type="Pfam" id="PF00380">
    <property type="entry name" value="Ribosomal_S9"/>
    <property type="match status" value="1"/>
</dbReference>
<dbReference type="SUPFAM" id="SSF54211">
    <property type="entry name" value="Ribosomal protein S5 domain 2-like"/>
    <property type="match status" value="1"/>
</dbReference>
<dbReference type="PROSITE" id="PS00360">
    <property type="entry name" value="RIBOSOMAL_S9"/>
    <property type="match status" value="1"/>
</dbReference>
<gene>
    <name evidence="1" type="primary">rpsI</name>
    <name type="ordered locus">Patl_3702</name>
</gene>
<evidence type="ECO:0000255" key="1">
    <source>
        <dbReference type="HAMAP-Rule" id="MF_00532"/>
    </source>
</evidence>
<evidence type="ECO:0000305" key="2"/>
<feature type="chain" id="PRO_1000051290" description="Small ribosomal subunit protein uS9">
    <location>
        <begin position="1"/>
        <end position="130"/>
    </location>
</feature>
<name>RS9_PSEA6</name>
<protein>
    <recommendedName>
        <fullName evidence="1">Small ribosomal subunit protein uS9</fullName>
    </recommendedName>
    <alternativeName>
        <fullName evidence="2">30S ribosomal protein S9</fullName>
    </alternativeName>
</protein>
<organism>
    <name type="scientific">Pseudoalteromonas atlantica (strain T6c / ATCC BAA-1087)</name>
    <dbReference type="NCBI Taxonomy" id="3042615"/>
    <lineage>
        <taxon>Bacteria</taxon>
        <taxon>Pseudomonadati</taxon>
        <taxon>Pseudomonadota</taxon>
        <taxon>Gammaproteobacteria</taxon>
        <taxon>Alteromonadales</taxon>
        <taxon>Alteromonadaceae</taxon>
        <taxon>Paraglaciecola</taxon>
    </lineage>
</organism>
<keyword id="KW-0687">Ribonucleoprotein</keyword>
<keyword id="KW-0689">Ribosomal protein</keyword>
<sequence>MADTQYYGTGRRKSSTARVFLRAGSGNIVVNKRPLDEFFGRETARMIVRQPLELVEMTEKFDLYVTVAGGGISGQAGAIRHGITRALMEFDETLRPSLRKAGFVTRDARKVERKKVGLHKARKRPQFSKR</sequence>
<reference key="1">
    <citation type="submission" date="2006-06" db="EMBL/GenBank/DDBJ databases">
        <title>Complete sequence of Pseudoalteromonas atlantica T6c.</title>
        <authorList>
            <consortium name="US DOE Joint Genome Institute"/>
            <person name="Copeland A."/>
            <person name="Lucas S."/>
            <person name="Lapidus A."/>
            <person name="Barry K."/>
            <person name="Detter J.C."/>
            <person name="Glavina del Rio T."/>
            <person name="Hammon N."/>
            <person name="Israni S."/>
            <person name="Dalin E."/>
            <person name="Tice H."/>
            <person name="Pitluck S."/>
            <person name="Saunders E."/>
            <person name="Brettin T."/>
            <person name="Bruce D."/>
            <person name="Han C."/>
            <person name="Tapia R."/>
            <person name="Gilna P."/>
            <person name="Schmutz J."/>
            <person name="Larimer F."/>
            <person name="Land M."/>
            <person name="Hauser L."/>
            <person name="Kyrpides N."/>
            <person name="Kim E."/>
            <person name="Karls A.C."/>
            <person name="Bartlett D."/>
            <person name="Higgins B.P."/>
            <person name="Richardson P."/>
        </authorList>
    </citation>
    <scope>NUCLEOTIDE SEQUENCE [LARGE SCALE GENOMIC DNA]</scope>
    <source>
        <strain>T6c / ATCC BAA-1087</strain>
    </source>
</reference>
<comment type="similarity">
    <text evidence="1">Belongs to the universal ribosomal protein uS9 family.</text>
</comment>